<accession>Q04210</accession>
<accession>D6VZL5</accession>
<dbReference type="EMBL" id="Z48502">
    <property type="protein sequence ID" value="CAA88406.1"/>
    <property type="molecule type" value="Genomic_DNA"/>
</dbReference>
<dbReference type="EMBL" id="BK006946">
    <property type="protein sequence ID" value="DAA09939.1"/>
    <property type="molecule type" value="Genomic_DNA"/>
</dbReference>
<dbReference type="PIR" id="S52889">
    <property type="entry name" value="S52889"/>
</dbReference>
<dbReference type="RefSeq" id="NP_013754.1">
    <property type="nucleotide sequence ID" value="NM_001182537.1"/>
</dbReference>
<dbReference type="SMR" id="Q04210"/>
<dbReference type="BioGRID" id="35212">
    <property type="interactions" value="54"/>
</dbReference>
<dbReference type="FunCoup" id="Q04210">
    <property type="interactions" value="121"/>
</dbReference>
<dbReference type="STRING" id="4932.YMR040W"/>
<dbReference type="PaxDb" id="4932-YMR040W"/>
<dbReference type="PeptideAtlas" id="Q04210"/>
<dbReference type="EnsemblFungi" id="YMR040W_mRNA">
    <property type="protein sequence ID" value="YMR040W"/>
    <property type="gene ID" value="YMR040W"/>
</dbReference>
<dbReference type="GeneID" id="855056"/>
<dbReference type="KEGG" id="sce:YMR040W"/>
<dbReference type="AGR" id="SGD:S000004643"/>
<dbReference type="SGD" id="S000004643">
    <property type="gene designation" value="YET2"/>
</dbReference>
<dbReference type="VEuPathDB" id="FungiDB:YMR040W"/>
<dbReference type="eggNOG" id="KOG1962">
    <property type="taxonomic scope" value="Eukaryota"/>
</dbReference>
<dbReference type="GeneTree" id="ENSGT00390000011863"/>
<dbReference type="HOGENOM" id="CLU_087648_1_0_1"/>
<dbReference type="InParanoid" id="Q04210"/>
<dbReference type="OMA" id="EMAILFI"/>
<dbReference type="OrthoDB" id="435607at2759"/>
<dbReference type="BioCyc" id="YEAST:G3O-32745-MONOMER"/>
<dbReference type="BioGRID-ORCS" id="855056">
    <property type="hits" value="0 hits in 10 CRISPR screens"/>
</dbReference>
<dbReference type="PRO" id="PR:Q04210"/>
<dbReference type="Proteomes" id="UP000002311">
    <property type="component" value="Chromosome XIII"/>
</dbReference>
<dbReference type="RNAct" id="Q04210">
    <property type="molecule type" value="protein"/>
</dbReference>
<dbReference type="GO" id="GO:0005783">
    <property type="term" value="C:endoplasmic reticulum"/>
    <property type="evidence" value="ECO:0007005"/>
    <property type="project" value="SGD"/>
</dbReference>
<dbReference type="GO" id="GO:0005789">
    <property type="term" value="C:endoplasmic reticulum membrane"/>
    <property type="evidence" value="ECO:0000318"/>
    <property type="project" value="GO_Central"/>
</dbReference>
<dbReference type="GO" id="GO:0006888">
    <property type="term" value="P:endoplasmic reticulum to Golgi vesicle-mediated transport"/>
    <property type="evidence" value="ECO:0000318"/>
    <property type="project" value="GO_Central"/>
</dbReference>
<dbReference type="GO" id="GO:0006886">
    <property type="term" value="P:intracellular protein transport"/>
    <property type="evidence" value="ECO:0007669"/>
    <property type="project" value="InterPro"/>
</dbReference>
<dbReference type="GO" id="GO:0070973">
    <property type="term" value="P:protein localization to endoplasmic reticulum exit site"/>
    <property type="evidence" value="ECO:0000318"/>
    <property type="project" value="GO_Central"/>
</dbReference>
<dbReference type="InterPro" id="IPR008417">
    <property type="entry name" value="BAP29/BAP31"/>
</dbReference>
<dbReference type="InterPro" id="IPR040463">
    <property type="entry name" value="BAP29/BAP31_N"/>
</dbReference>
<dbReference type="PANTHER" id="PTHR12701">
    <property type="entry name" value="BCR-ASSOCIATED PROTEIN, BAP"/>
    <property type="match status" value="1"/>
</dbReference>
<dbReference type="PANTHER" id="PTHR12701:SF19">
    <property type="entry name" value="ENDOPLASMIC RETICULUM TRANSMEMBRANE PROTEIN 1-RELATED"/>
    <property type="match status" value="1"/>
</dbReference>
<dbReference type="Pfam" id="PF05529">
    <property type="entry name" value="Bap31"/>
    <property type="match status" value="1"/>
</dbReference>
<feature type="chain" id="PRO_0000203275" description="Endoplasmic reticulum transmembrane protein 2">
    <location>
        <begin position="1"/>
        <end position="160"/>
    </location>
</feature>
<feature type="topological domain" description="Lumenal" evidence="2">
    <location>
        <begin position="1"/>
        <end position="2"/>
    </location>
</feature>
<feature type="transmembrane region" description="Helical" evidence="2">
    <location>
        <begin position="3"/>
        <end position="23"/>
    </location>
</feature>
<feature type="topological domain" description="Cytoplasmic" evidence="2">
    <location>
        <begin position="24"/>
        <end position="45"/>
    </location>
</feature>
<feature type="transmembrane region" description="Helical" evidence="2">
    <location>
        <begin position="46"/>
        <end position="66"/>
    </location>
</feature>
<feature type="topological domain" description="Lumenal" evidence="2">
    <location>
        <begin position="67"/>
        <end position="103"/>
    </location>
</feature>
<feature type="transmembrane region" description="Helical" evidence="2">
    <location>
        <begin position="104"/>
        <end position="124"/>
    </location>
</feature>
<feature type="topological domain" description="Cytoplasmic" evidence="2">
    <location>
        <begin position="125"/>
        <end position="160"/>
    </location>
</feature>
<feature type="short sequence motif" description="Di-lysine motif">
    <location>
        <begin position="157"/>
        <end position="160"/>
    </location>
</feature>
<keyword id="KW-0256">Endoplasmic reticulum</keyword>
<keyword id="KW-0931">ER-Golgi transport</keyword>
<keyword id="KW-0472">Membrane</keyword>
<keyword id="KW-0653">Protein transport</keyword>
<keyword id="KW-1185">Reference proteome</keyword>
<keyword id="KW-0812">Transmembrane</keyword>
<keyword id="KW-1133">Transmembrane helix</keyword>
<keyword id="KW-0813">Transport</keyword>
<name>YET2_YEAST</name>
<evidence type="ECO:0000250" key="1"/>
<evidence type="ECO:0000255" key="2"/>
<evidence type="ECO:0000269" key="3">
    <source ref="3"/>
</evidence>
<evidence type="ECO:0000305" key="4"/>
<sequence length="160" mass="19178">MGVYLAVLFSLLVIEMAILFILVLPLPQRMRRWLYIRYSIISTNKKFRTYMVGIMIFVGLLFIDSWKRSQIRVSTYRNQKNPYIINSVTPVDALASRAYNQRNVYISGFIIYFYICILTVMSILRRIVEWNDKMKAGDDILKEKLRRKQKYLEELQKKKF</sequence>
<gene>
    <name type="primary">YET2</name>
    <name type="ordered locus">YMR040W</name>
    <name type="ORF">YM9532.05</name>
</gene>
<protein>
    <recommendedName>
        <fullName>Endoplasmic reticulum transmembrane protein 2</fullName>
    </recommendedName>
</protein>
<comment type="function">
    <text evidence="3">May play a role in anterograde transport of membrane proteins from the endoplasmic reticulum to the Golgi.</text>
</comment>
<comment type="subcellular location">
    <subcellularLocation>
        <location evidence="1">Endoplasmic reticulum membrane</location>
        <topology evidence="1">Multi-pass membrane protein</topology>
    </subcellularLocation>
</comment>
<comment type="domain">
    <text evidence="1">The di-lysine motif confers endoplasmic reticulum localization for type I membrane proteins.</text>
</comment>
<comment type="similarity">
    <text evidence="4">Belongs to the BCAP29/BCAP31 family.</text>
</comment>
<reference key="1">
    <citation type="journal article" date="1997" name="Nature">
        <title>The nucleotide sequence of Saccharomyces cerevisiae chromosome XIII.</title>
        <authorList>
            <person name="Bowman S."/>
            <person name="Churcher C.M."/>
            <person name="Badcock K."/>
            <person name="Brown D."/>
            <person name="Chillingworth T."/>
            <person name="Connor R."/>
            <person name="Dedman K."/>
            <person name="Devlin K."/>
            <person name="Gentles S."/>
            <person name="Hamlin N."/>
            <person name="Hunt S."/>
            <person name="Jagels K."/>
            <person name="Lye G."/>
            <person name="Moule S."/>
            <person name="Odell C."/>
            <person name="Pearson D."/>
            <person name="Rajandream M.A."/>
            <person name="Rice P."/>
            <person name="Skelton J."/>
            <person name="Walsh S.V."/>
            <person name="Whitehead S."/>
            <person name="Barrell B.G."/>
        </authorList>
    </citation>
    <scope>NUCLEOTIDE SEQUENCE [LARGE SCALE GENOMIC DNA]</scope>
    <source>
        <strain>ATCC 204508 / S288c</strain>
    </source>
</reference>
<reference key="2">
    <citation type="journal article" date="2014" name="G3 (Bethesda)">
        <title>The reference genome sequence of Saccharomyces cerevisiae: Then and now.</title>
        <authorList>
            <person name="Engel S.R."/>
            <person name="Dietrich F.S."/>
            <person name="Fisk D.G."/>
            <person name="Binkley G."/>
            <person name="Balakrishnan R."/>
            <person name="Costanzo M.C."/>
            <person name="Dwight S.S."/>
            <person name="Hitz B.C."/>
            <person name="Karra K."/>
            <person name="Nash R.S."/>
            <person name="Weng S."/>
            <person name="Wong E.D."/>
            <person name="Lloyd P."/>
            <person name="Skrzypek M.S."/>
            <person name="Miyasato S.R."/>
            <person name="Simison M."/>
            <person name="Cherry J.M."/>
        </authorList>
    </citation>
    <scope>GENOME REANNOTATION</scope>
    <source>
        <strain>ATCC 204508 / S288c</strain>
    </source>
</reference>
<reference key="3">
    <citation type="journal article" date="2006" name="J. Biol. Sci. (Faisalabad)">
        <title>YET1, YET2 and YET3 of Saccharomyces cerevisiae encode BAP31 homologs with partially overlapping functions.</title>
        <authorList>
            <person name="Toikkanen J.H."/>
            <person name="Fatal N."/>
            <person name="Hilden P."/>
            <person name="Makarow M."/>
            <person name="Kuismanen E."/>
        </authorList>
    </citation>
    <scope>FUNCTION</scope>
</reference>
<reference key="4">
    <citation type="journal article" date="2006" name="Proc. Natl. Acad. Sci. U.S.A.">
        <title>A global topology map of the Saccharomyces cerevisiae membrane proteome.</title>
        <authorList>
            <person name="Kim H."/>
            <person name="Melen K."/>
            <person name="Oesterberg M."/>
            <person name="von Heijne G."/>
        </authorList>
    </citation>
    <scope>TOPOLOGY [LARGE SCALE ANALYSIS]</scope>
    <source>
        <strain>ATCC 208353 / W303-1A</strain>
    </source>
</reference>
<proteinExistence type="evidence at protein level"/>
<organism>
    <name type="scientific">Saccharomyces cerevisiae (strain ATCC 204508 / S288c)</name>
    <name type="common">Baker's yeast</name>
    <dbReference type="NCBI Taxonomy" id="559292"/>
    <lineage>
        <taxon>Eukaryota</taxon>
        <taxon>Fungi</taxon>
        <taxon>Dikarya</taxon>
        <taxon>Ascomycota</taxon>
        <taxon>Saccharomycotina</taxon>
        <taxon>Saccharomycetes</taxon>
        <taxon>Saccharomycetales</taxon>
        <taxon>Saccharomycetaceae</taxon>
        <taxon>Saccharomyces</taxon>
    </lineage>
</organism>